<protein>
    <recommendedName>
        <fullName evidence="1">Elongation factor P</fullName>
        <shortName evidence="1">EF-P</shortName>
    </recommendedName>
</protein>
<proteinExistence type="inferred from homology"/>
<gene>
    <name evidence="1" type="primary">efp</name>
    <name type="ordered locus">GTNG_2341</name>
</gene>
<comment type="function">
    <text evidence="1">Involved in peptide bond synthesis. Stimulates efficient translation and peptide-bond synthesis on native or reconstituted 70S ribosomes in vitro. Probably functions indirectly by altering the affinity of the ribosome for aminoacyl-tRNA, thus increasing their reactivity as acceptors for peptidyl transferase.</text>
</comment>
<comment type="pathway">
    <text evidence="1">Protein biosynthesis; polypeptide chain elongation.</text>
</comment>
<comment type="subcellular location">
    <subcellularLocation>
        <location evidence="1">Cytoplasm</location>
    </subcellularLocation>
</comment>
<comment type="similarity">
    <text evidence="1">Belongs to the elongation factor P family.</text>
</comment>
<accession>A4IQT4</accession>
<evidence type="ECO:0000255" key="1">
    <source>
        <dbReference type="HAMAP-Rule" id="MF_00141"/>
    </source>
</evidence>
<name>EFP_GEOTN</name>
<feature type="chain" id="PRO_1000010751" description="Elongation factor P">
    <location>
        <begin position="1"/>
        <end position="185"/>
    </location>
</feature>
<reference key="1">
    <citation type="journal article" date="2007" name="Proc. Natl. Acad. Sci. U.S.A.">
        <title>Genome and proteome of long-chain alkane degrading Geobacillus thermodenitrificans NG80-2 isolated from a deep-subsurface oil reservoir.</title>
        <authorList>
            <person name="Feng L."/>
            <person name="Wang W."/>
            <person name="Cheng J."/>
            <person name="Ren Y."/>
            <person name="Zhao G."/>
            <person name="Gao C."/>
            <person name="Tang Y."/>
            <person name="Liu X."/>
            <person name="Han W."/>
            <person name="Peng X."/>
            <person name="Liu R."/>
            <person name="Wang L."/>
        </authorList>
    </citation>
    <scope>NUCLEOTIDE SEQUENCE [LARGE SCALE GENOMIC DNA]</scope>
    <source>
        <strain>NG80-2</strain>
    </source>
</reference>
<dbReference type="EMBL" id="CP000557">
    <property type="protein sequence ID" value="ABO67688.1"/>
    <property type="molecule type" value="Genomic_DNA"/>
</dbReference>
<dbReference type="RefSeq" id="WP_008879820.1">
    <property type="nucleotide sequence ID" value="NC_009328.1"/>
</dbReference>
<dbReference type="SMR" id="A4IQT4"/>
<dbReference type="GeneID" id="87623563"/>
<dbReference type="KEGG" id="gtn:GTNG_2341"/>
<dbReference type="eggNOG" id="COG0231">
    <property type="taxonomic scope" value="Bacteria"/>
</dbReference>
<dbReference type="HOGENOM" id="CLU_074944_0_1_9"/>
<dbReference type="UniPathway" id="UPA00345"/>
<dbReference type="Proteomes" id="UP000001578">
    <property type="component" value="Chromosome"/>
</dbReference>
<dbReference type="GO" id="GO:0005737">
    <property type="term" value="C:cytoplasm"/>
    <property type="evidence" value="ECO:0007669"/>
    <property type="project" value="UniProtKB-SubCell"/>
</dbReference>
<dbReference type="GO" id="GO:0003746">
    <property type="term" value="F:translation elongation factor activity"/>
    <property type="evidence" value="ECO:0007669"/>
    <property type="project" value="UniProtKB-UniRule"/>
</dbReference>
<dbReference type="GO" id="GO:0043043">
    <property type="term" value="P:peptide biosynthetic process"/>
    <property type="evidence" value="ECO:0007669"/>
    <property type="project" value="InterPro"/>
</dbReference>
<dbReference type="CDD" id="cd04470">
    <property type="entry name" value="S1_EF-P_repeat_1"/>
    <property type="match status" value="1"/>
</dbReference>
<dbReference type="CDD" id="cd05794">
    <property type="entry name" value="S1_EF-P_repeat_2"/>
    <property type="match status" value="1"/>
</dbReference>
<dbReference type="FunFam" id="2.30.30.30:FF:000010">
    <property type="entry name" value="Elongation factor P"/>
    <property type="match status" value="1"/>
</dbReference>
<dbReference type="FunFam" id="2.40.50.140:FF:000004">
    <property type="entry name" value="Elongation factor P"/>
    <property type="match status" value="1"/>
</dbReference>
<dbReference type="FunFam" id="2.40.50.140:FF:000009">
    <property type="entry name" value="Elongation factor P"/>
    <property type="match status" value="1"/>
</dbReference>
<dbReference type="Gene3D" id="2.30.30.30">
    <property type="match status" value="1"/>
</dbReference>
<dbReference type="Gene3D" id="2.40.50.140">
    <property type="entry name" value="Nucleic acid-binding proteins"/>
    <property type="match status" value="2"/>
</dbReference>
<dbReference type="HAMAP" id="MF_00141">
    <property type="entry name" value="EF_P"/>
    <property type="match status" value="1"/>
</dbReference>
<dbReference type="InterPro" id="IPR015365">
    <property type="entry name" value="Elong-fact-P_C"/>
</dbReference>
<dbReference type="InterPro" id="IPR012340">
    <property type="entry name" value="NA-bd_OB-fold"/>
</dbReference>
<dbReference type="InterPro" id="IPR014722">
    <property type="entry name" value="Rib_uL2_dom2"/>
</dbReference>
<dbReference type="InterPro" id="IPR020599">
    <property type="entry name" value="Transl_elong_fac_P/YeiP"/>
</dbReference>
<dbReference type="InterPro" id="IPR013185">
    <property type="entry name" value="Transl_elong_KOW-like"/>
</dbReference>
<dbReference type="InterPro" id="IPR001059">
    <property type="entry name" value="Transl_elong_P/YeiP_cen"/>
</dbReference>
<dbReference type="InterPro" id="IPR013852">
    <property type="entry name" value="Transl_elong_P/YeiP_CS"/>
</dbReference>
<dbReference type="InterPro" id="IPR011768">
    <property type="entry name" value="Transl_elongation_fac_P"/>
</dbReference>
<dbReference type="InterPro" id="IPR008991">
    <property type="entry name" value="Translation_prot_SH3-like_sf"/>
</dbReference>
<dbReference type="NCBIfam" id="TIGR00038">
    <property type="entry name" value="efp"/>
    <property type="match status" value="1"/>
</dbReference>
<dbReference type="NCBIfam" id="NF001810">
    <property type="entry name" value="PRK00529.1"/>
    <property type="match status" value="1"/>
</dbReference>
<dbReference type="PANTHER" id="PTHR30053">
    <property type="entry name" value="ELONGATION FACTOR P"/>
    <property type="match status" value="1"/>
</dbReference>
<dbReference type="PANTHER" id="PTHR30053:SF12">
    <property type="entry name" value="ELONGATION FACTOR P (EF-P) FAMILY PROTEIN"/>
    <property type="match status" value="1"/>
</dbReference>
<dbReference type="Pfam" id="PF01132">
    <property type="entry name" value="EFP"/>
    <property type="match status" value="1"/>
</dbReference>
<dbReference type="Pfam" id="PF08207">
    <property type="entry name" value="EFP_N"/>
    <property type="match status" value="1"/>
</dbReference>
<dbReference type="Pfam" id="PF09285">
    <property type="entry name" value="Elong-fact-P_C"/>
    <property type="match status" value="1"/>
</dbReference>
<dbReference type="PIRSF" id="PIRSF005901">
    <property type="entry name" value="EF-P"/>
    <property type="match status" value="1"/>
</dbReference>
<dbReference type="SMART" id="SM01185">
    <property type="entry name" value="EFP"/>
    <property type="match status" value="1"/>
</dbReference>
<dbReference type="SMART" id="SM00841">
    <property type="entry name" value="Elong-fact-P_C"/>
    <property type="match status" value="1"/>
</dbReference>
<dbReference type="SUPFAM" id="SSF50249">
    <property type="entry name" value="Nucleic acid-binding proteins"/>
    <property type="match status" value="2"/>
</dbReference>
<dbReference type="SUPFAM" id="SSF50104">
    <property type="entry name" value="Translation proteins SH3-like domain"/>
    <property type="match status" value="1"/>
</dbReference>
<dbReference type="PROSITE" id="PS01275">
    <property type="entry name" value="EFP"/>
    <property type="match status" value="1"/>
</dbReference>
<sequence>MISVNDFRTGLTIEVDGEIWRVLEFQHVKPGKGAAFVRSKLRNLRTGAIQERTFRAGEKVNRAQIDTRKMQYLYANGDLHVFMDMETYEQIELPAKQIEYELKFLKENMEVFIMMYQGETIGVELPNTVELKVVETEPGIKGDTASGGSKPAKLETGLVVQVPFFVNEGDTLIINTADGTYVSRA</sequence>
<keyword id="KW-0963">Cytoplasm</keyword>
<keyword id="KW-0251">Elongation factor</keyword>
<keyword id="KW-0648">Protein biosynthesis</keyword>
<organism>
    <name type="scientific">Geobacillus thermodenitrificans (strain NG80-2)</name>
    <dbReference type="NCBI Taxonomy" id="420246"/>
    <lineage>
        <taxon>Bacteria</taxon>
        <taxon>Bacillati</taxon>
        <taxon>Bacillota</taxon>
        <taxon>Bacilli</taxon>
        <taxon>Bacillales</taxon>
        <taxon>Anoxybacillaceae</taxon>
        <taxon>Geobacillus</taxon>
    </lineage>
</organism>